<organism>
    <name type="scientific">Escherichia coli O81 (strain ED1a)</name>
    <dbReference type="NCBI Taxonomy" id="585397"/>
    <lineage>
        <taxon>Bacteria</taxon>
        <taxon>Pseudomonadati</taxon>
        <taxon>Pseudomonadota</taxon>
        <taxon>Gammaproteobacteria</taxon>
        <taxon>Enterobacterales</taxon>
        <taxon>Enterobacteriaceae</taxon>
        <taxon>Escherichia</taxon>
    </lineage>
</organism>
<keyword id="KW-0143">Chaperone</keyword>
<keyword id="KW-0963">Cytoplasm</keyword>
<protein>
    <recommendedName>
        <fullName evidence="1">Co-chaperonin GroES</fullName>
    </recommendedName>
    <alternativeName>
        <fullName evidence="1">10 kDa chaperonin</fullName>
    </alternativeName>
    <alternativeName>
        <fullName evidence="1">Chaperonin-10</fullName>
        <shortName evidence="1">Cpn10</shortName>
    </alternativeName>
</protein>
<sequence>MNIRPLHDRVIVKRKEVETKSAGGIVLTGSAAAKSTRGEVLAVGNGRILENGEVKPLDVKVGDIVIFNDGYGVKSEKIDNEEVLIMSESDILAIVEA</sequence>
<accession>B7MSG3</accession>
<proteinExistence type="inferred from homology"/>
<comment type="function">
    <text evidence="1">Together with the chaperonin GroEL, plays an essential role in assisting protein folding. The GroEL-GroES system forms a nano-cage that allows encapsulation of the non-native substrate proteins and provides a physical environment optimized to promote and accelerate protein folding. GroES binds to the apical surface of the GroEL ring, thereby capping the opening of the GroEL channel.</text>
</comment>
<comment type="subunit">
    <text evidence="1">Heptamer of 7 subunits arranged in a ring. Interacts with the chaperonin GroEL.</text>
</comment>
<comment type="subcellular location">
    <subcellularLocation>
        <location evidence="1">Cytoplasm</location>
    </subcellularLocation>
</comment>
<comment type="similarity">
    <text evidence="1">Belongs to the GroES chaperonin family.</text>
</comment>
<reference key="1">
    <citation type="journal article" date="2009" name="PLoS Genet.">
        <title>Organised genome dynamics in the Escherichia coli species results in highly diverse adaptive paths.</title>
        <authorList>
            <person name="Touchon M."/>
            <person name="Hoede C."/>
            <person name="Tenaillon O."/>
            <person name="Barbe V."/>
            <person name="Baeriswyl S."/>
            <person name="Bidet P."/>
            <person name="Bingen E."/>
            <person name="Bonacorsi S."/>
            <person name="Bouchier C."/>
            <person name="Bouvet O."/>
            <person name="Calteau A."/>
            <person name="Chiapello H."/>
            <person name="Clermont O."/>
            <person name="Cruveiller S."/>
            <person name="Danchin A."/>
            <person name="Diard M."/>
            <person name="Dossat C."/>
            <person name="Karoui M.E."/>
            <person name="Frapy E."/>
            <person name="Garry L."/>
            <person name="Ghigo J.M."/>
            <person name="Gilles A.M."/>
            <person name="Johnson J."/>
            <person name="Le Bouguenec C."/>
            <person name="Lescat M."/>
            <person name="Mangenot S."/>
            <person name="Martinez-Jehanne V."/>
            <person name="Matic I."/>
            <person name="Nassif X."/>
            <person name="Oztas S."/>
            <person name="Petit M.A."/>
            <person name="Pichon C."/>
            <person name="Rouy Z."/>
            <person name="Ruf C.S."/>
            <person name="Schneider D."/>
            <person name="Tourret J."/>
            <person name="Vacherie B."/>
            <person name="Vallenet D."/>
            <person name="Medigue C."/>
            <person name="Rocha E.P.C."/>
            <person name="Denamur E."/>
        </authorList>
    </citation>
    <scope>NUCLEOTIDE SEQUENCE [LARGE SCALE GENOMIC DNA]</scope>
    <source>
        <strain>ED1a</strain>
    </source>
</reference>
<name>CH10_ECO81</name>
<gene>
    <name evidence="1" type="primary">groES</name>
    <name evidence="1" type="synonym">groS</name>
    <name type="ordered locus">ECED1_4930</name>
</gene>
<dbReference type="EMBL" id="CU928162">
    <property type="protein sequence ID" value="CAR10887.1"/>
    <property type="molecule type" value="Genomic_DNA"/>
</dbReference>
<dbReference type="RefSeq" id="WP_001026276.1">
    <property type="nucleotide sequence ID" value="NC_011745.1"/>
</dbReference>
<dbReference type="SMR" id="B7MSG3"/>
<dbReference type="KEGG" id="ecq:ECED1_4930"/>
<dbReference type="HOGENOM" id="CLU_132825_1_1_6"/>
<dbReference type="Proteomes" id="UP000000748">
    <property type="component" value="Chromosome"/>
</dbReference>
<dbReference type="GO" id="GO:0005737">
    <property type="term" value="C:cytoplasm"/>
    <property type="evidence" value="ECO:0007669"/>
    <property type="project" value="UniProtKB-SubCell"/>
</dbReference>
<dbReference type="GO" id="GO:0005524">
    <property type="term" value="F:ATP binding"/>
    <property type="evidence" value="ECO:0007669"/>
    <property type="project" value="InterPro"/>
</dbReference>
<dbReference type="GO" id="GO:0046872">
    <property type="term" value="F:metal ion binding"/>
    <property type="evidence" value="ECO:0007669"/>
    <property type="project" value="TreeGrafter"/>
</dbReference>
<dbReference type="GO" id="GO:0044183">
    <property type="term" value="F:protein folding chaperone"/>
    <property type="evidence" value="ECO:0007669"/>
    <property type="project" value="InterPro"/>
</dbReference>
<dbReference type="GO" id="GO:0051087">
    <property type="term" value="F:protein-folding chaperone binding"/>
    <property type="evidence" value="ECO:0007669"/>
    <property type="project" value="TreeGrafter"/>
</dbReference>
<dbReference type="GO" id="GO:0051082">
    <property type="term" value="F:unfolded protein binding"/>
    <property type="evidence" value="ECO:0007669"/>
    <property type="project" value="TreeGrafter"/>
</dbReference>
<dbReference type="GO" id="GO:0051085">
    <property type="term" value="P:chaperone cofactor-dependent protein refolding"/>
    <property type="evidence" value="ECO:0007669"/>
    <property type="project" value="TreeGrafter"/>
</dbReference>
<dbReference type="CDD" id="cd00320">
    <property type="entry name" value="cpn10"/>
    <property type="match status" value="1"/>
</dbReference>
<dbReference type="FunFam" id="2.30.33.40:FF:000001">
    <property type="entry name" value="10 kDa chaperonin"/>
    <property type="match status" value="1"/>
</dbReference>
<dbReference type="Gene3D" id="2.30.33.40">
    <property type="entry name" value="GroES chaperonin"/>
    <property type="match status" value="1"/>
</dbReference>
<dbReference type="HAMAP" id="MF_00580">
    <property type="entry name" value="CH10"/>
    <property type="match status" value="1"/>
</dbReference>
<dbReference type="InterPro" id="IPR020818">
    <property type="entry name" value="Chaperonin_GroES"/>
</dbReference>
<dbReference type="InterPro" id="IPR037124">
    <property type="entry name" value="Chaperonin_GroES_sf"/>
</dbReference>
<dbReference type="InterPro" id="IPR018369">
    <property type="entry name" value="Chaprnonin_Cpn10_CS"/>
</dbReference>
<dbReference type="InterPro" id="IPR011032">
    <property type="entry name" value="GroES-like_sf"/>
</dbReference>
<dbReference type="NCBIfam" id="NF001526">
    <property type="entry name" value="PRK00364.1-1"/>
    <property type="match status" value="1"/>
</dbReference>
<dbReference type="NCBIfam" id="NF001527">
    <property type="entry name" value="PRK00364.1-2"/>
    <property type="match status" value="1"/>
</dbReference>
<dbReference type="NCBIfam" id="NF001531">
    <property type="entry name" value="PRK00364.2-2"/>
    <property type="match status" value="1"/>
</dbReference>
<dbReference type="PANTHER" id="PTHR10772">
    <property type="entry name" value="10 KDA HEAT SHOCK PROTEIN"/>
    <property type="match status" value="1"/>
</dbReference>
<dbReference type="PANTHER" id="PTHR10772:SF58">
    <property type="entry name" value="CO-CHAPERONIN GROES"/>
    <property type="match status" value="1"/>
</dbReference>
<dbReference type="Pfam" id="PF00166">
    <property type="entry name" value="Cpn10"/>
    <property type="match status" value="1"/>
</dbReference>
<dbReference type="PRINTS" id="PR00297">
    <property type="entry name" value="CHAPERONIN10"/>
</dbReference>
<dbReference type="SMART" id="SM00883">
    <property type="entry name" value="Cpn10"/>
    <property type="match status" value="1"/>
</dbReference>
<dbReference type="SUPFAM" id="SSF50129">
    <property type="entry name" value="GroES-like"/>
    <property type="match status" value="1"/>
</dbReference>
<dbReference type="PROSITE" id="PS00681">
    <property type="entry name" value="CHAPERONINS_CPN10"/>
    <property type="match status" value="1"/>
</dbReference>
<evidence type="ECO:0000255" key="1">
    <source>
        <dbReference type="HAMAP-Rule" id="MF_00580"/>
    </source>
</evidence>
<feature type="chain" id="PRO_1000146905" description="Co-chaperonin GroES">
    <location>
        <begin position="1"/>
        <end position="97"/>
    </location>
</feature>